<comment type="function">
    <text evidence="1">Could be responsible for synthesis of pseudouridine from uracil-13 in transfer RNAs.</text>
</comment>
<comment type="catalytic activity">
    <reaction evidence="1">
        <text>uridine(13) in tRNA = pseudouridine(13) in tRNA</text>
        <dbReference type="Rhea" id="RHEA:42540"/>
        <dbReference type="Rhea" id="RHEA-COMP:10105"/>
        <dbReference type="Rhea" id="RHEA-COMP:10106"/>
        <dbReference type="ChEBI" id="CHEBI:65314"/>
        <dbReference type="ChEBI" id="CHEBI:65315"/>
        <dbReference type="EC" id="5.4.99.27"/>
    </reaction>
</comment>
<comment type="similarity">
    <text evidence="1">Belongs to the pseudouridine synthase TruD family.</text>
</comment>
<evidence type="ECO:0000255" key="1">
    <source>
        <dbReference type="HAMAP-Rule" id="MF_01082"/>
    </source>
</evidence>
<name>TRUD_METKA</name>
<accession>Q8TXJ7</accession>
<keyword id="KW-0413">Isomerase</keyword>
<keyword id="KW-1185">Reference proteome</keyword>
<keyword id="KW-0819">tRNA processing</keyword>
<dbReference type="EC" id="5.4.99.27" evidence="1"/>
<dbReference type="EMBL" id="AE009439">
    <property type="protein sequence ID" value="AAM01891.1"/>
    <property type="molecule type" value="Genomic_DNA"/>
</dbReference>
<dbReference type="SMR" id="Q8TXJ7"/>
<dbReference type="FunCoup" id="Q8TXJ7">
    <property type="interactions" value="75"/>
</dbReference>
<dbReference type="STRING" id="190192.MK0676"/>
<dbReference type="PaxDb" id="190192-MK0676"/>
<dbReference type="EnsemblBacteria" id="AAM01891">
    <property type="protein sequence ID" value="AAM01891"/>
    <property type="gene ID" value="MK0676"/>
</dbReference>
<dbReference type="KEGG" id="mka:MK0676"/>
<dbReference type="PATRIC" id="fig|190192.8.peg.715"/>
<dbReference type="HOGENOM" id="CLU_005281_4_1_2"/>
<dbReference type="InParanoid" id="Q8TXJ7"/>
<dbReference type="Proteomes" id="UP000001826">
    <property type="component" value="Chromosome"/>
</dbReference>
<dbReference type="GO" id="GO:0003723">
    <property type="term" value="F:RNA binding"/>
    <property type="evidence" value="ECO:0007669"/>
    <property type="project" value="InterPro"/>
</dbReference>
<dbReference type="GO" id="GO:0160150">
    <property type="term" value="F:tRNA pseudouridine(13) synthase activity"/>
    <property type="evidence" value="ECO:0007669"/>
    <property type="project" value="UniProtKB-EC"/>
</dbReference>
<dbReference type="GO" id="GO:0031119">
    <property type="term" value="P:tRNA pseudouridine synthesis"/>
    <property type="evidence" value="ECO:0007669"/>
    <property type="project" value="UniProtKB-UniRule"/>
</dbReference>
<dbReference type="CDD" id="cd02577">
    <property type="entry name" value="PSTD1"/>
    <property type="match status" value="1"/>
</dbReference>
<dbReference type="FunFam" id="3.30.70.3160:FF:000001">
    <property type="entry name" value="Probable tRNA pseudouridine synthase D"/>
    <property type="match status" value="1"/>
</dbReference>
<dbReference type="Gene3D" id="3.30.2350.20">
    <property type="entry name" value="TruD, catalytic domain"/>
    <property type="match status" value="3"/>
</dbReference>
<dbReference type="HAMAP" id="MF_01082">
    <property type="entry name" value="TruD"/>
    <property type="match status" value="1"/>
</dbReference>
<dbReference type="InterPro" id="IPR020103">
    <property type="entry name" value="PsdUridine_synth_cat_dom_sf"/>
</dbReference>
<dbReference type="InterPro" id="IPR001656">
    <property type="entry name" value="PsdUridine_synth_TruD"/>
</dbReference>
<dbReference type="InterPro" id="IPR020119">
    <property type="entry name" value="PsdUridine_synth_TruD_CS"/>
</dbReference>
<dbReference type="InterPro" id="IPR011760">
    <property type="entry name" value="PsdUridine_synth_TruD_insert"/>
</dbReference>
<dbReference type="InterPro" id="IPR042214">
    <property type="entry name" value="TruD_catalytic"/>
</dbReference>
<dbReference type="NCBIfam" id="TIGR00094">
    <property type="entry name" value="tRNA_TruD_broad"/>
    <property type="match status" value="1"/>
</dbReference>
<dbReference type="PANTHER" id="PTHR13326:SF21">
    <property type="entry name" value="PSEUDOURIDYLATE SYNTHASE PUS7L"/>
    <property type="match status" value="1"/>
</dbReference>
<dbReference type="PANTHER" id="PTHR13326">
    <property type="entry name" value="TRNA PSEUDOURIDINE SYNTHASE D"/>
    <property type="match status" value="1"/>
</dbReference>
<dbReference type="Pfam" id="PF01142">
    <property type="entry name" value="TruD"/>
    <property type="match status" value="2"/>
</dbReference>
<dbReference type="PIRSF" id="PIRSF037016">
    <property type="entry name" value="Pseudouridin_synth_euk_prd"/>
    <property type="match status" value="1"/>
</dbReference>
<dbReference type="SUPFAM" id="SSF55120">
    <property type="entry name" value="Pseudouridine synthase"/>
    <property type="match status" value="1"/>
</dbReference>
<dbReference type="PROSITE" id="PS50984">
    <property type="entry name" value="TRUD"/>
    <property type="match status" value="1"/>
</dbReference>
<dbReference type="PROSITE" id="PS01268">
    <property type="entry name" value="UPF0024"/>
    <property type="match status" value="1"/>
</dbReference>
<reference key="1">
    <citation type="journal article" date="2002" name="Proc. Natl. Acad. Sci. U.S.A.">
        <title>The complete genome of hyperthermophile Methanopyrus kandleri AV19 and monophyly of archaeal methanogens.</title>
        <authorList>
            <person name="Slesarev A.I."/>
            <person name="Mezhevaya K.V."/>
            <person name="Makarova K.S."/>
            <person name="Polushin N.N."/>
            <person name="Shcherbinina O.V."/>
            <person name="Shakhova V.V."/>
            <person name="Belova G.I."/>
            <person name="Aravind L."/>
            <person name="Natale D.A."/>
            <person name="Rogozin I.B."/>
            <person name="Tatusov R.L."/>
            <person name="Wolf Y.I."/>
            <person name="Stetter K.O."/>
            <person name="Malykh A.G."/>
            <person name="Koonin E.V."/>
            <person name="Kozyavkin S.A."/>
        </authorList>
    </citation>
    <scope>NUCLEOTIDE SEQUENCE [LARGE SCALE GENOMIC DNA]</scope>
    <source>
        <strain>AV19 / DSM 6324 / JCM 9639 / NBRC 100938</strain>
    </source>
</reference>
<gene>
    <name evidence="1" type="primary">truD</name>
    <name type="ordered locus">MK0676</name>
</gene>
<protein>
    <recommendedName>
        <fullName evidence="1">Probable tRNA pseudouridine synthase D</fullName>
        <ecNumber evidence="1">5.4.99.27</ecNumber>
    </recommendedName>
    <alternativeName>
        <fullName evidence="1">tRNA pseudouridine(13) synthase</fullName>
    </alternativeName>
    <alternativeName>
        <fullName evidence="1">tRNA pseudouridylate synthase D</fullName>
    </alternativeName>
    <alternativeName>
        <fullName evidence="1">tRNA-uridine isomerase D</fullName>
    </alternativeName>
</protein>
<proteinExistence type="inferred from homology"/>
<sequence length="400" mass="46488">MEKPSRNTYIPLTIVGECPECREYHRGRECPECGQDLRRPRLRPQFGGRGPHTLFYLEKYDWDTMKAVRRIAQALRKHHRHFGIAGMKDKRAVTSQRVTVRGVPPGVLARLRIRDLKIVPMGRARRKLRPGDLWGNRFVITVRGAKVRRLPEALRTVRELGGVPNYYGLQRFGSRRPVTHVVGKYVVLEDWEKAVKTFLTLEYPRESPEALEARRWLKEHWGEFKEALRRFPKFLDYERHILEHLARHPHDYINAFRRLPMWIRRMFVHAYQSYLFNRILSERIARGLPVHRPVEGDVTQDGLPTVPLPGFRTELSDGPQGEIEREVLEEEGVRLEDFEIKSMPELSAGGDRKPALLRVYGLRAEAIGDDTVRFTFSLPRGGYATTVLRELLGSEGVYAD</sequence>
<feature type="chain" id="PRO_0000152542" description="Probable tRNA pseudouridine synthase D">
    <location>
        <begin position="1"/>
        <end position="400"/>
    </location>
</feature>
<feature type="domain" description="TRUD" evidence="1">
    <location>
        <begin position="162"/>
        <end position="357"/>
    </location>
</feature>
<feature type="active site" description="Nucleophile" evidence="1">
    <location>
        <position position="89"/>
    </location>
</feature>
<organism>
    <name type="scientific">Methanopyrus kandleri (strain AV19 / DSM 6324 / JCM 9639 / NBRC 100938)</name>
    <dbReference type="NCBI Taxonomy" id="190192"/>
    <lineage>
        <taxon>Archaea</taxon>
        <taxon>Methanobacteriati</taxon>
        <taxon>Methanobacteriota</taxon>
        <taxon>Methanomada group</taxon>
        <taxon>Methanopyri</taxon>
        <taxon>Methanopyrales</taxon>
        <taxon>Methanopyraceae</taxon>
        <taxon>Methanopyrus</taxon>
    </lineage>
</organism>